<accession>C4YLS2</accession>
<gene>
    <name evidence="1" type="primary">RAD27</name>
    <name evidence="1" type="synonym">FEN1</name>
    <name type="ORF">CAWG_01791</name>
</gene>
<dbReference type="EC" id="3.1.-.-" evidence="1"/>
<dbReference type="EMBL" id="CM000309">
    <property type="protein sequence ID" value="EEQ43553.1"/>
    <property type="molecule type" value="Genomic_DNA"/>
</dbReference>
<dbReference type="SMR" id="C4YLS2"/>
<dbReference type="PaxDb" id="5476-C4YLS2"/>
<dbReference type="VEuPathDB" id="FungiDB:CAWG_01791"/>
<dbReference type="HOGENOM" id="CLU_032444_2_0_1"/>
<dbReference type="OMA" id="MGIPWVQ"/>
<dbReference type="OrthoDB" id="14702at766764"/>
<dbReference type="Proteomes" id="UP000001429">
    <property type="component" value="Chromosome R"/>
</dbReference>
<dbReference type="GO" id="GO:0005739">
    <property type="term" value="C:mitochondrion"/>
    <property type="evidence" value="ECO:0007669"/>
    <property type="project" value="UniProtKB-SubCell"/>
</dbReference>
<dbReference type="GO" id="GO:0005730">
    <property type="term" value="C:nucleolus"/>
    <property type="evidence" value="ECO:0007669"/>
    <property type="project" value="UniProtKB-SubCell"/>
</dbReference>
<dbReference type="GO" id="GO:0005654">
    <property type="term" value="C:nucleoplasm"/>
    <property type="evidence" value="ECO:0007669"/>
    <property type="project" value="UniProtKB-SubCell"/>
</dbReference>
<dbReference type="GO" id="GO:0008409">
    <property type="term" value="F:5'-3' exonuclease activity"/>
    <property type="evidence" value="ECO:0007669"/>
    <property type="project" value="UniProtKB-UniRule"/>
</dbReference>
<dbReference type="GO" id="GO:0017108">
    <property type="term" value="F:5'-flap endonuclease activity"/>
    <property type="evidence" value="ECO:0007669"/>
    <property type="project" value="UniProtKB-UniRule"/>
</dbReference>
<dbReference type="GO" id="GO:0003677">
    <property type="term" value="F:DNA binding"/>
    <property type="evidence" value="ECO:0007669"/>
    <property type="project" value="UniProtKB-UniRule"/>
</dbReference>
<dbReference type="GO" id="GO:0000287">
    <property type="term" value="F:magnesium ion binding"/>
    <property type="evidence" value="ECO:0007669"/>
    <property type="project" value="UniProtKB-UniRule"/>
</dbReference>
<dbReference type="GO" id="GO:0006284">
    <property type="term" value="P:base-excision repair"/>
    <property type="evidence" value="ECO:0007669"/>
    <property type="project" value="UniProtKB-UniRule"/>
</dbReference>
<dbReference type="GO" id="GO:0043137">
    <property type="term" value="P:DNA replication, removal of RNA primer"/>
    <property type="evidence" value="ECO:0007669"/>
    <property type="project" value="UniProtKB-UniRule"/>
</dbReference>
<dbReference type="CDD" id="cd09907">
    <property type="entry name" value="H3TH_FEN1-Euk"/>
    <property type="match status" value="1"/>
</dbReference>
<dbReference type="CDD" id="cd09867">
    <property type="entry name" value="PIN_FEN1"/>
    <property type="match status" value="1"/>
</dbReference>
<dbReference type="FunFam" id="1.10.150.20:FF:000009">
    <property type="entry name" value="Flap endonuclease 1"/>
    <property type="match status" value="1"/>
</dbReference>
<dbReference type="FunFam" id="3.40.50.1010:FF:000003">
    <property type="entry name" value="Flap endonuclease 1"/>
    <property type="match status" value="1"/>
</dbReference>
<dbReference type="Gene3D" id="1.10.150.20">
    <property type="entry name" value="5' to 3' exonuclease, C-terminal subdomain"/>
    <property type="match status" value="1"/>
</dbReference>
<dbReference type="Gene3D" id="3.40.50.1010">
    <property type="entry name" value="5'-nuclease"/>
    <property type="match status" value="1"/>
</dbReference>
<dbReference type="HAMAP" id="MF_00614">
    <property type="entry name" value="Fen"/>
    <property type="match status" value="1"/>
</dbReference>
<dbReference type="InterPro" id="IPR036279">
    <property type="entry name" value="5-3_exonuclease_C_sf"/>
</dbReference>
<dbReference type="InterPro" id="IPR023426">
    <property type="entry name" value="Flap_endonuc"/>
</dbReference>
<dbReference type="InterPro" id="IPR008918">
    <property type="entry name" value="HhH2"/>
</dbReference>
<dbReference type="InterPro" id="IPR029060">
    <property type="entry name" value="PIN-like_dom_sf"/>
</dbReference>
<dbReference type="InterPro" id="IPR006086">
    <property type="entry name" value="XPG-I_dom"/>
</dbReference>
<dbReference type="InterPro" id="IPR006084">
    <property type="entry name" value="XPG/Rad2"/>
</dbReference>
<dbReference type="InterPro" id="IPR019974">
    <property type="entry name" value="XPG_CS"/>
</dbReference>
<dbReference type="InterPro" id="IPR006085">
    <property type="entry name" value="XPG_DNA_repair_N"/>
</dbReference>
<dbReference type="PANTHER" id="PTHR11081:SF9">
    <property type="entry name" value="FLAP ENDONUCLEASE 1"/>
    <property type="match status" value="1"/>
</dbReference>
<dbReference type="PANTHER" id="PTHR11081">
    <property type="entry name" value="FLAP ENDONUCLEASE FAMILY MEMBER"/>
    <property type="match status" value="1"/>
</dbReference>
<dbReference type="Pfam" id="PF00867">
    <property type="entry name" value="XPG_I"/>
    <property type="match status" value="1"/>
</dbReference>
<dbReference type="Pfam" id="PF00752">
    <property type="entry name" value="XPG_N"/>
    <property type="match status" value="1"/>
</dbReference>
<dbReference type="PRINTS" id="PR00853">
    <property type="entry name" value="XPGRADSUPER"/>
</dbReference>
<dbReference type="SMART" id="SM00279">
    <property type="entry name" value="HhH2"/>
    <property type="match status" value="1"/>
</dbReference>
<dbReference type="SMART" id="SM00484">
    <property type="entry name" value="XPGI"/>
    <property type="match status" value="1"/>
</dbReference>
<dbReference type="SMART" id="SM00485">
    <property type="entry name" value="XPGN"/>
    <property type="match status" value="1"/>
</dbReference>
<dbReference type="SUPFAM" id="SSF47807">
    <property type="entry name" value="5' to 3' exonuclease, C-terminal subdomain"/>
    <property type="match status" value="1"/>
</dbReference>
<dbReference type="SUPFAM" id="SSF88723">
    <property type="entry name" value="PIN domain-like"/>
    <property type="match status" value="1"/>
</dbReference>
<dbReference type="PROSITE" id="PS00841">
    <property type="entry name" value="XPG_1"/>
    <property type="match status" value="1"/>
</dbReference>
<dbReference type="PROSITE" id="PS00842">
    <property type="entry name" value="XPG_2"/>
    <property type="match status" value="1"/>
</dbReference>
<sequence length="372" mass="42158">MGVKGLNQLIKEHSPSAYKEFQLKNLFGRKVAIDASMCLYQFLIAVRQSDGQQLTNEDGETTSHLSGMFYRTIKMVENNIKPVYVFDGKPPVLKGGELEKRLLRREEAQKQKTALGDEGTVEEVLKFEKRLVRVTREQNEEAKKLLQLMGIPCVDAPCEAEAQCAELARGGKVYAAASEDMDTLCYEPPFLLRHLTFSEARKMPIDQIEYKDAIAGLDMTKEQFIDLCILLGCDYCESIKGIGQATAFKLIKEHGSLDNIVEWIKNNKTKYTLPENWPFDEARQLFMNPEVTNASEISLKWKEPDVDGLIEFMVKQKGFSEDRIRSGAEKLKKGLKGGVQGRLDGFFKVVKTDDKKRKADPKESKASKKKKK</sequence>
<proteinExistence type="inferred from homology"/>
<evidence type="ECO:0000255" key="1">
    <source>
        <dbReference type="HAMAP-Rule" id="MF_03140"/>
    </source>
</evidence>
<evidence type="ECO:0000256" key="2">
    <source>
        <dbReference type="SAM" id="MobiDB-lite"/>
    </source>
</evidence>
<keyword id="KW-0227">DNA damage</keyword>
<keyword id="KW-0234">DNA repair</keyword>
<keyword id="KW-0235">DNA replication</keyword>
<keyword id="KW-0255">Endonuclease</keyword>
<keyword id="KW-0269">Exonuclease</keyword>
<keyword id="KW-0378">Hydrolase</keyword>
<keyword id="KW-0460">Magnesium</keyword>
<keyword id="KW-0479">Metal-binding</keyword>
<keyword id="KW-0496">Mitochondrion</keyword>
<keyword id="KW-0540">Nuclease</keyword>
<keyword id="KW-0539">Nucleus</keyword>
<keyword id="KW-0597">Phosphoprotein</keyword>
<organism>
    <name type="scientific">Candida albicans (strain WO-1)</name>
    <name type="common">Yeast</name>
    <dbReference type="NCBI Taxonomy" id="294748"/>
    <lineage>
        <taxon>Eukaryota</taxon>
        <taxon>Fungi</taxon>
        <taxon>Dikarya</taxon>
        <taxon>Ascomycota</taxon>
        <taxon>Saccharomycotina</taxon>
        <taxon>Pichiomycetes</taxon>
        <taxon>Debaryomycetaceae</taxon>
        <taxon>Candida/Lodderomyces clade</taxon>
        <taxon>Candida</taxon>
    </lineage>
</organism>
<reference key="1">
    <citation type="journal article" date="2009" name="Nature">
        <title>Evolution of pathogenicity and sexual reproduction in eight Candida genomes.</title>
        <authorList>
            <person name="Butler G."/>
            <person name="Rasmussen M.D."/>
            <person name="Lin M.F."/>
            <person name="Santos M.A.S."/>
            <person name="Sakthikumar S."/>
            <person name="Munro C.A."/>
            <person name="Rheinbay E."/>
            <person name="Grabherr M."/>
            <person name="Forche A."/>
            <person name="Reedy J.L."/>
            <person name="Agrafioti I."/>
            <person name="Arnaud M.B."/>
            <person name="Bates S."/>
            <person name="Brown A.J.P."/>
            <person name="Brunke S."/>
            <person name="Costanzo M.C."/>
            <person name="Fitzpatrick D.A."/>
            <person name="de Groot P.W.J."/>
            <person name="Harris D."/>
            <person name="Hoyer L.L."/>
            <person name="Hube B."/>
            <person name="Klis F.M."/>
            <person name="Kodira C."/>
            <person name="Lennard N."/>
            <person name="Logue M.E."/>
            <person name="Martin R."/>
            <person name="Neiman A.M."/>
            <person name="Nikolaou E."/>
            <person name="Quail M.A."/>
            <person name="Quinn J."/>
            <person name="Santos M.C."/>
            <person name="Schmitzberger F.F."/>
            <person name="Sherlock G."/>
            <person name="Shah P."/>
            <person name="Silverstein K.A.T."/>
            <person name="Skrzypek M.S."/>
            <person name="Soll D."/>
            <person name="Staggs R."/>
            <person name="Stansfield I."/>
            <person name="Stumpf M.P.H."/>
            <person name="Sudbery P.E."/>
            <person name="Srikantha T."/>
            <person name="Zeng Q."/>
            <person name="Berman J."/>
            <person name="Berriman M."/>
            <person name="Heitman J."/>
            <person name="Gow N.A.R."/>
            <person name="Lorenz M.C."/>
            <person name="Birren B.W."/>
            <person name="Kellis M."/>
            <person name="Cuomo C.A."/>
        </authorList>
    </citation>
    <scope>NUCLEOTIDE SEQUENCE [LARGE SCALE GENOMIC DNA]</scope>
    <source>
        <strain>WO-1</strain>
    </source>
</reference>
<protein>
    <recommendedName>
        <fullName evidence="1">Flap endonuclease 1</fullName>
        <shortName evidence="1">FEN-1</shortName>
        <ecNumber evidence="1">3.1.-.-</ecNumber>
    </recommendedName>
    <alternativeName>
        <fullName evidence="1">Flap structure-specific endonuclease 1</fullName>
    </alternativeName>
</protein>
<name>FEN1_CANAW</name>
<comment type="function">
    <text evidence="1">Structure-specific nuclease with 5'-flap endonuclease and 5'-3' exonuclease activities involved in DNA replication and repair. During DNA replication, cleaves the 5'-overhanging flap structure that is generated by displacement synthesis when DNA polymerase encounters the 5'-end of a downstream Okazaki fragment. It enters the flap from the 5'-end and then tracks to cleave the flap base, leaving a nick for ligation. Also involved in the long patch base excision repair (LP-BER) pathway, by cleaving within the apurinic/apyrimidinic (AP) site-terminated flap. Acts as a genome stabilization factor that prevents flaps from equilibrating into structures that lead to duplications and deletions. Also possesses 5'-3' exonuclease activity on nicked or gapped double-stranded DNA, and exhibits RNase H activity. Also involved in replication and repair of rDNA and in repairing mitochondrial DNA.</text>
</comment>
<comment type="cofactor">
    <cofactor evidence="1">
        <name>Mg(2+)</name>
        <dbReference type="ChEBI" id="CHEBI:18420"/>
    </cofactor>
    <text evidence="1">Binds 2 magnesium ions per subunit. They probably participate in the reaction catalyzed by the enzyme. May bind an additional third magnesium ion after substrate binding.</text>
</comment>
<comment type="subunit">
    <text evidence="1">Interacts with PCNA. Three molecules of RAD27 bind to one PCNA trimer with each molecule binding to one PCNA monomer. PCNA stimulates the nuclease activity without altering cleavage specificity.</text>
</comment>
<comment type="subcellular location">
    <subcellularLocation>
        <location evidence="1">Nucleus</location>
        <location evidence="1">Nucleolus</location>
    </subcellularLocation>
    <subcellularLocation>
        <location evidence="1">Nucleus</location>
        <location evidence="1">Nucleoplasm</location>
    </subcellularLocation>
    <subcellularLocation>
        <location evidence="1">Mitochondrion</location>
    </subcellularLocation>
    <text evidence="1">Resides mostly in the nucleoli and relocalizes to the nucleoplasm upon DNA damage.</text>
</comment>
<comment type="PTM">
    <text evidence="1">Phosphorylated. Phosphorylation upon DNA damage induces relocalization to the nuclear plasma.</text>
</comment>
<comment type="similarity">
    <text evidence="1">Belongs to the XPG/RAD2 endonuclease family. FEN1 subfamily.</text>
</comment>
<feature type="chain" id="PRO_0000403566" description="Flap endonuclease 1">
    <location>
        <begin position="1"/>
        <end position="372"/>
    </location>
</feature>
<feature type="region of interest" description="N-domain">
    <location>
        <begin position="1"/>
        <end position="105"/>
    </location>
</feature>
<feature type="region of interest" description="I-domain">
    <location>
        <begin position="123"/>
        <end position="254"/>
    </location>
</feature>
<feature type="region of interest" description="Interaction with PCNA" evidence="1">
    <location>
        <begin position="339"/>
        <end position="347"/>
    </location>
</feature>
<feature type="region of interest" description="Disordered" evidence="2">
    <location>
        <begin position="353"/>
        <end position="372"/>
    </location>
</feature>
<feature type="compositionally biased region" description="Basic and acidic residues" evidence="2">
    <location>
        <begin position="353"/>
        <end position="366"/>
    </location>
</feature>
<feature type="binding site" evidence="1">
    <location>
        <position position="34"/>
    </location>
    <ligand>
        <name>Mg(2+)</name>
        <dbReference type="ChEBI" id="CHEBI:18420"/>
        <label>1</label>
    </ligand>
</feature>
<feature type="binding site" evidence="1">
    <location>
        <position position="47"/>
    </location>
    <ligand>
        <name>DNA</name>
        <dbReference type="ChEBI" id="CHEBI:16991"/>
    </ligand>
</feature>
<feature type="binding site" evidence="1">
    <location>
        <position position="71"/>
    </location>
    <ligand>
        <name>DNA</name>
        <dbReference type="ChEBI" id="CHEBI:16991"/>
    </ligand>
</feature>
<feature type="binding site" evidence="1">
    <location>
        <position position="87"/>
    </location>
    <ligand>
        <name>Mg(2+)</name>
        <dbReference type="ChEBI" id="CHEBI:18420"/>
        <label>1</label>
    </ligand>
</feature>
<feature type="binding site" evidence="1">
    <location>
        <position position="159"/>
    </location>
    <ligand>
        <name>DNA</name>
        <dbReference type="ChEBI" id="CHEBI:16991"/>
    </ligand>
</feature>
<feature type="binding site" evidence="1">
    <location>
        <position position="159"/>
    </location>
    <ligand>
        <name>Mg(2+)</name>
        <dbReference type="ChEBI" id="CHEBI:18420"/>
        <label>1</label>
    </ligand>
</feature>
<feature type="binding site" evidence="1">
    <location>
        <position position="161"/>
    </location>
    <ligand>
        <name>Mg(2+)</name>
        <dbReference type="ChEBI" id="CHEBI:18420"/>
        <label>1</label>
    </ligand>
</feature>
<feature type="binding site" evidence="1">
    <location>
        <position position="180"/>
    </location>
    <ligand>
        <name>Mg(2+)</name>
        <dbReference type="ChEBI" id="CHEBI:18420"/>
        <label>2</label>
    </ligand>
</feature>
<feature type="binding site" evidence="1">
    <location>
        <position position="182"/>
    </location>
    <ligand>
        <name>Mg(2+)</name>
        <dbReference type="ChEBI" id="CHEBI:18420"/>
        <label>2</label>
    </ligand>
</feature>
<feature type="binding site" evidence="1">
    <location>
        <position position="232"/>
    </location>
    <ligand>
        <name>DNA</name>
        <dbReference type="ChEBI" id="CHEBI:16991"/>
    </ligand>
</feature>
<feature type="binding site" evidence="1">
    <location>
        <position position="234"/>
    </location>
    <ligand>
        <name>DNA</name>
        <dbReference type="ChEBI" id="CHEBI:16991"/>
    </ligand>
</feature>
<feature type="binding site" evidence="1">
    <location>
        <position position="234"/>
    </location>
    <ligand>
        <name>Mg(2+)</name>
        <dbReference type="ChEBI" id="CHEBI:18420"/>
        <label>2</label>
    </ligand>
</feature>